<dbReference type="EC" id="2.3.1.35" evidence="1"/>
<dbReference type="EC" id="2.3.1.1" evidence="1"/>
<dbReference type="EMBL" id="BA000039">
    <property type="protein sequence ID" value="BAC09463.1"/>
    <property type="molecule type" value="Genomic_DNA"/>
</dbReference>
<dbReference type="RefSeq" id="NP_682701.1">
    <property type="nucleotide sequence ID" value="NC_004113.1"/>
</dbReference>
<dbReference type="RefSeq" id="WP_011057748.1">
    <property type="nucleotide sequence ID" value="NC_004113.1"/>
</dbReference>
<dbReference type="SMR" id="Q8DHN4"/>
<dbReference type="STRING" id="197221.gene:10748517"/>
<dbReference type="MEROPS" id="T05.002"/>
<dbReference type="EnsemblBacteria" id="BAC09463">
    <property type="protein sequence ID" value="BAC09463"/>
    <property type="gene ID" value="BAC09463"/>
</dbReference>
<dbReference type="KEGG" id="tel:tll1911"/>
<dbReference type="PATRIC" id="fig|197221.4.peg.1997"/>
<dbReference type="eggNOG" id="COG1364">
    <property type="taxonomic scope" value="Bacteria"/>
</dbReference>
<dbReference type="UniPathway" id="UPA00068">
    <property type="reaction ID" value="UER00106"/>
</dbReference>
<dbReference type="UniPathway" id="UPA00068">
    <property type="reaction ID" value="UER00111"/>
</dbReference>
<dbReference type="Proteomes" id="UP000000440">
    <property type="component" value="Chromosome"/>
</dbReference>
<dbReference type="GO" id="GO:0005737">
    <property type="term" value="C:cytoplasm"/>
    <property type="evidence" value="ECO:0007669"/>
    <property type="project" value="UniProtKB-SubCell"/>
</dbReference>
<dbReference type="GO" id="GO:0004358">
    <property type="term" value="F:glutamate N-acetyltransferase activity"/>
    <property type="evidence" value="ECO:0007669"/>
    <property type="project" value="UniProtKB-UniRule"/>
</dbReference>
<dbReference type="GO" id="GO:0004042">
    <property type="term" value="F:L-glutamate N-acetyltransferase activity"/>
    <property type="evidence" value="ECO:0007669"/>
    <property type="project" value="UniProtKB-UniRule"/>
</dbReference>
<dbReference type="GO" id="GO:0006526">
    <property type="term" value="P:L-arginine biosynthetic process"/>
    <property type="evidence" value="ECO:0007669"/>
    <property type="project" value="UniProtKB-UniRule"/>
</dbReference>
<dbReference type="GO" id="GO:0006592">
    <property type="term" value="P:ornithine biosynthetic process"/>
    <property type="evidence" value="ECO:0007669"/>
    <property type="project" value="TreeGrafter"/>
</dbReference>
<dbReference type="CDD" id="cd02152">
    <property type="entry name" value="OAT"/>
    <property type="match status" value="1"/>
</dbReference>
<dbReference type="FunFam" id="3.10.20.340:FF:000001">
    <property type="entry name" value="Arginine biosynthesis bifunctional protein ArgJ, chloroplastic"/>
    <property type="match status" value="1"/>
</dbReference>
<dbReference type="FunFam" id="3.60.70.12:FF:000001">
    <property type="entry name" value="Arginine biosynthesis bifunctional protein ArgJ, chloroplastic"/>
    <property type="match status" value="1"/>
</dbReference>
<dbReference type="Gene3D" id="3.10.20.340">
    <property type="entry name" value="ArgJ beta chain, C-terminal domain"/>
    <property type="match status" value="1"/>
</dbReference>
<dbReference type="Gene3D" id="3.60.70.12">
    <property type="entry name" value="L-amino peptidase D-ALA esterase/amidase"/>
    <property type="match status" value="1"/>
</dbReference>
<dbReference type="HAMAP" id="MF_01106">
    <property type="entry name" value="ArgJ"/>
    <property type="match status" value="1"/>
</dbReference>
<dbReference type="InterPro" id="IPR002813">
    <property type="entry name" value="Arg_biosynth_ArgJ"/>
</dbReference>
<dbReference type="InterPro" id="IPR016117">
    <property type="entry name" value="ArgJ-like_dom_sf"/>
</dbReference>
<dbReference type="InterPro" id="IPR042195">
    <property type="entry name" value="ArgJ_beta_C"/>
</dbReference>
<dbReference type="NCBIfam" id="TIGR00120">
    <property type="entry name" value="ArgJ"/>
    <property type="match status" value="1"/>
</dbReference>
<dbReference type="NCBIfam" id="NF003802">
    <property type="entry name" value="PRK05388.1"/>
    <property type="match status" value="1"/>
</dbReference>
<dbReference type="PANTHER" id="PTHR23100">
    <property type="entry name" value="ARGININE BIOSYNTHESIS BIFUNCTIONAL PROTEIN ARGJ"/>
    <property type="match status" value="1"/>
</dbReference>
<dbReference type="PANTHER" id="PTHR23100:SF0">
    <property type="entry name" value="ARGININE BIOSYNTHESIS BIFUNCTIONAL PROTEIN ARGJ, MITOCHONDRIAL"/>
    <property type="match status" value="1"/>
</dbReference>
<dbReference type="Pfam" id="PF01960">
    <property type="entry name" value="ArgJ"/>
    <property type="match status" value="1"/>
</dbReference>
<dbReference type="SUPFAM" id="SSF56266">
    <property type="entry name" value="DmpA/ArgJ-like"/>
    <property type="match status" value="1"/>
</dbReference>
<accession>Q8DHN4</accession>
<organism>
    <name type="scientific">Thermosynechococcus vestitus (strain NIES-2133 / IAM M-273 / BP-1)</name>
    <dbReference type="NCBI Taxonomy" id="197221"/>
    <lineage>
        <taxon>Bacteria</taxon>
        <taxon>Bacillati</taxon>
        <taxon>Cyanobacteriota</taxon>
        <taxon>Cyanophyceae</taxon>
        <taxon>Acaryochloridales</taxon>
        <taxon>Thermosynechococcaceae</taxon>
        <taxon>Thermosynechococcus</taxon>
    </lineage>
</organism>
<keyword id="KW-0012">Acyltransferase</keyword>
<keyword id="KW-0028">Amino-acid biosynthesis</keyword>
<keyword id="KW-0055">Arginine biosynthesis</keyword>
<keyword id="KW-0068">Autocatalytic cleavage</keyword>
<keyword id="KW-0963">Cytoplasm</keyword>
<keyword id="KW-0511">Multifunctional enzyme</keyword>
<keyword id="KW-1185">Reference proteome</keyword>
<keyword id="KW-0808">Transferase</keyword>
<feature type="chain" id="PRO_0000002251" description="Arginine biosynthesis bifunctional protein ArgJ alpha chain" evidence="1">
    <location>
        <begin position="1"/>
        <end position="190"/>
    </location>
</feature>
<feature type="chain" id="PRO_0000002252" description="Arginine biosynthesis bifunctional protein ArgJ beta chain" evidence="1">
    <location>
        <begin position="191"/>
        <end position="419"/>
    </location>
</feature>
<feature type="active site" description="Nucleophile" evidence="1">
    <location>
        <position position="191"/>
    </location>
</feature>
<feature type="binding site" evidence="1">
    <location>
        <position position="154"/>
    </location>
    <ligand>
        <name>substrate</name>
    </ligand>
</feature>
<feature type="binding site" evidence="1">
    <location>
        <position position="180"/>
    </location>
    <ligand>
        <name>substrate</name>
    </ligand>
</feature>
<feature type="binding site" evidence="1">
    <location>
        <position position="191"/>
    </location>
    <ligand>
        <name>substrate</name>
    </ligand>
</feature>
<feature type="binding site" evidence="1">
    <location>
        <position position="277"/>
    </location>
    <ligand>
        <name>substrate</name>
    </ligand>
</feature>
<feature type="binding site" evidence="1">
    <location>
        <position position="414"/>
    </location>
    <ligand>
        <name>substrate</name>
    </ligand>
</feature>
<feature type="binding site" evidence="1">
    <location>
        <position position="419"/>
    </location>
    <ligand>
        <name>substrate</name>
    </ligand>
</feature>
<feature type="site" description="Involved in the stabilization of negative charge on the oxyanion by the formation of the oxyanion hole" evidence="1">
    <location>
        <position position="117"/>
    </location>
</feature>
<feature type="site" description="Involved in the stabilization of negative charge on the oxyanion by the formation of the oxyanion hole" evidence="1">
    <location>
        <position position="118"/>
    </location>
</feature>
<feature type="site" description="Cleavage; by autolysis" evidence="1">
    <location>
        <begin position="190"/>
        <end position="191"/>
    </location>
</feature>
<name>ARGJ_THEVB</name>
<gene>
    <name evidence="1" type="primary">argJ</name>
    <name type="ordered locus">tll1911</name>
</gene>
<protein>
    <recommendedName>
        <fullName evidence="1">Arginine biosynthesis bifunctional protein ArgJ</fullName>
    </recommendedName>
    <domain>
        <recommendedName>
            <fullName evidence="1">Glutamate N-acetyltransferase</fullName>
            <ecNumber evidence="1">2.3.1.35</ecNumber>
        </recommendedName>
        <alternativeName>
            <fullName evidence="1">Ornithine acetyltransferase</fullName>
            <shortName evidence="1">OATase</shortName>
        </alternativeName>
        <alternativeName>
            <fullName evidence="1">Ornithine transacetylase</fullName>
        </alternativeName>
    </domain>
    <domain>
        <recommendedName>
            <fullName evidence="1">Amino-acid acetyltransferase</fullName>
            <ecNumber evidence="1">2.3.1.1</ecNumber>
        </recommendedName>
        <alternativeName>
            <fullName evidence="1">N-acetylglutamate synthase</fullName>
            <shortName evidence="1">AGSase</shortName>
        </alternativeName>
    </domain>
    <component>
        <recommendedName>
            <fullName evidence="1">Arginine biosynthesis bifunctional protein ArgJ alpha chain</fullName>
        </recommendedName>
    </component>
    <component>
        <recommendedName>
            <fullName evidence="1">Arginine biosynthesis bifunctional protein ArgJ beta chain</fullName>
        </recommendedName>
    </component>
</protein>
<reference key="1">
    <citation type="journal article" date="2002" name="DNA Res.">
        <title>Complete genome structure of the thermophilic cyanobacterium Thermosynechococcus elongatus BP-1.</title>
        <authorList>
            <person name="Nakamura Y."/>
            <person name="Kaneko T."/>
            <person name="Sato S."/>
            <person name="Ikeuchi M."/>
            <person name="Katoh H."/>
            <person name="Sasamoto S."/>
            <person name="Watanabe A."/>
            <person name="Iriguchi M."/>
            <person name="Kawashima K."/>
            <person name="Kimura T."/>
            <person name="Kishida Y."/>
            <person name="Kiyokawa C."/>
            <person name="Kohara M."/>
            <person name="Matsumoto M."/>
            <person name="Matsuno A."/>
            <person name="Nakazaki N."/>
            <person name="Shimpo S."/>
            <person name="Sugimoto M."/>
            <person name="Takeuchi C."/>
            <person name="Yamada M."/>
            <person name="Tabata S."/>
        </authorList>
    </citation>
    <scope>NUCLEOTIDE SEQUENCE [LARGE SCALE GENOMIC DNA]</scope>
    <source>
        <strain>NIES-2133 / IAM M-273 / BP-1</strain>
    </source>
</reference>
<sequence>MSHWQQITGGVTAAKGYRAAGITAGLKASGAPDLALIVSDVPAIAAGVFTTNHMCAAPVRYCRQRLQTKGTAQAILCNSGQANAATGEQGWQAVLAQADMVATALGFSPEMVLVASTGVIGQPIPLEKMRQALPTLTANLSDGGGEAAARAIMTTDLVPKQIALEAEWEGQTIRIGGMAKGSGMIHPKMATMLAFITCDAAVSPHLWQEMLQRACDRSFNQITVDGDTSTNDSVIALANGQSRTPAIAEPGAAATRLEEMLTAVCVHLAKAIARDGEGATCLIEVQVSGASDDTAARQVARTIASSMLVKSAIYGRDPNWGRIAAAAGRAGVPFDASNLAIALGGIPMMRHGQPLPFDPAAAHAYLVQQAAASTDASGQQSIDHPVVIEVSIGSGSGRGVAWGCDLSYDYVKINAEYTT</sequence>
<comment type="function">
    <text evidence="1">Catalyzes two activities which are involved in the cyclic version of arginine biosynthesis: the synthesis of N-acetylglutamate from glutamate and acetyl-CoA as the acetyl donor, and of ornithine by transacetylation between N(2)-acetylornithine and glutamate.</text>
</comment>
<comment type="catalytic activity">
    <reaction evidence="1">
        <text>N(2)-acetyl-L-ornithine + L-glutamate = N-acetyl-L-glutamate + L-ornithine</text>
        <dbReference type="Rhea" id="RHEA:15349"/>
        <dbReference type="ChEBI" id="CHEBI:29985"/>
        <dbReference type="ChEBI" id="CHEBI:44337"/>
        <dbReference type="ChEBI" id="CHEBI:46911"/>
        <dbReference type="ChEBI" id="CHEBI:57805"/>
        <dbReference type="EC" id="2.3.1.35"/>
    </reaction>
</comment>
<comment type="catalytic activity">
    <reaction evidence="1">
        <text>L-glutamate + acetyl-CoA = N-acetyl-L-glutamate + CoA + H(+)</text>
        <dbReference type="Rhea" id="RHEA:24292"/>
        <dbReference type="ChEBI" id="CHEBI:15378"/>
        <dbReference type="ChEBI" id="CHEBI:29985"/>
        <dbReference type="ChEBI" id="CHEBI:44337"/>
        <dbReference type="ChEBI" id="CHEBI:57287"/>
        <dbReference type="ChEBI" id="CHEBI:57288"/>
        <dbReference type="EC" id="2.3.1.1"/>
    </reaction>
</comment>
<comment type="pathway">
    <text evidence="1">Amino-acid biosynthesis; L-arginine biosynthesis; L-ornithine and N-acetyl-L-glutamate from L-glutamate and N(2)-acetyl-L-ornithine (cyclic): step 1/1.</text>
</comment>
<comment type="pathway">
    <text evidence="1">Amino-acid biosynthesis; L-arginine biosynthesis; N(2)-acetyl-L-ornithine from L-glutamate: step 1/4.</text>
</comment>
<comment type="subunit">
    <text evidence="1">Heterotetramer of two alpha and two beta chains.</text>
</comment>
<comment type="subcellular location">
    <subcellularLocation>
        <location evidence="1">Cytoplasm</location>
    </subcellularLocation>
</comment>
<comment type="similarity">
    <text evidence="1">Belongs to the ArgJ family.</text>
</comment>
<proteinExistence type="inferred from homology"/>
<evidence type="ECO:0000255" key="1">
    <source>
        <dbReference type="HAMAP-Rule" id="MF_01106"/>
    </source>
</evidence>